<gene>
    <name evidence="1" type="primary">pgk</name>
    <name type="ordered locus">ABC3020</name>
</gene>
<feature type="chain" id="PRO_1000057968" description="Phosphoglycerate kinase">
    <location>
        <begin position="1"/>
        <end position="394"/>
    </location>
</feature>
<feature type="binding site" evidence="1">
    <location>
        <begin position="21"/>
        <end position="23"/>
    </location>
    <ligand>
        <name>substrate</name>
    </ligand>
</feature>
<feature type="binding site" evidence="1">
    <location>
        <position position="36"/>
    </location>
    <ligand>
        <name>substrate</name>
    </ligand>
</feature>
<feature type="binding site" evidence="1">
    <location>
        <begin position="59"/>
        <end position="62"/>
    </location>
    <ligand>
        <name>substrate</name>
    </ligand>
</feature>
<feature type="binding site" evidence="1">
    <location>
        <position position="118"/>
    </location>
    <ligand>
        <name>substrate</name>
    </ligand>
</feature>
<feature type="binding site" evidence="1">
    <location>
        <position position="151"/>
    </location>
    <ligand>
        <name>substrate</name>
    </ligand>
</feature>
<feature type="binding site" evidence="1">
    <location>
        <position position="201"/>
    </location>
    <ligand>
        <name>ATP</name>
        <dbReference type="ChEBI" id="CHEBI:30616"/>
    </ligand>
</feature>
<feature type="binding site" evidence="1">
    <location>
        <position position="323"/>
    </location>
    <ligand>
        <name>ATP</name>
        <dbReference type="ChEBI" id="CHEBI:30616"/>
    </ligand>
</feature>
<feature type="binding site" evidence="1">
    <location>
        <begin position="350"/>
        <end position="353"/>
    </location>
    <ligand>
        <name>ATP</name>
        <dbReference type="ChEBI" id="CHEBI:30616"/>
    </ligand>
</feature>
<feature type="modified residue" description="Phosphoserine" evidence="1">
    <location>
        <position position="183"/>
    </location>
</feature>
<feature type="modified residue" description="Phosphothreonine" evidence="1">
    <location>
        <position position="299"/>
    </location>
</feature>
<protein>
    <recommendedName>
        <fullName evidence="1">Phosphoglycerate kinase</fullName>
        <ecNumber evidence="1">2.7.2.3</ecNumber>
    </recommendedName>
</protein>
<proteinExistence type="inferred from homology"/>
<reference key="1">
    <citation type="submission" date="2003-10" db="EMBL/GenBank/DDBJ databases">
        <title>The complete genome sequence of the alkaliphilic Bacillus clausii KSM-K16.</title>
        <authorList>
            <person name="Takaki Y."/>
            <person name="Kageyama Y."/>
            <person name="Shimamura S."/>
            <person name="Suzuki H."/>
            <person name="Nishi S."/>
            <person name="Hatada Y."/>
            <person name="Kawai S."/>
            <person name="Ito S."/>
            <person name="Horikoshi K."/>
        </authorList>
    </citation>
    <scope>NUCLEOTIDE SEQUENCE [LARGE SCALE GENOMIC DNA]</scope>
    <source>
        <strain>KSM-K16</strain>
    </source>
</reference>
<dbReference type="EC" id="2.7.2.3" evidence="1"/>
<dbReference type="EMBL" id="AP006627">
    <property type="protein sequence ID" value="BAD65554.1"/>
    <property type="molecule type" value="Genomic_DNA"/>
</dbReference>
<dbReference type="RefSeq" id="WP_011247862.1">
    <property type="nucleotide sequence ID" value="NC_006582.1"/>
</dbReference>
<dbReference type="SMR" id="Q5WDK6"/>
<dbReference type="STRING" id="66692.ABC3020"/>
<dbReference type="KEGG" id="bcl:ABC3020"/>
<dbReference type="eggNOG" id="COG0126">
    <property type="taxonomic scope" value="Bacteria"/>
</dbReference>
<dbReference type="HOGENOM" id="CLU_025427_0_2_9"/>
<dbReference type="OrthoDB" id="9808460at2"/>
<dbReference type="UniPathway" id="UPA00109">
    <property type="reaction ID" value="UER00185"/>
</dbReference>
<dbReference type="Proteomes" id="UP000001168">
    <property type="component" value="Chromosome"/>
</dbReference>
<dbReference type="GO" id="GO:0005829">
    <property type="term" value="C:cytosol"/>
    <property type="evidence" value="ECO:0007669"/>
    <property type="project" value="TreeGrafter"/>
</dbReference>
<dbReference type="GO" id="GO:0043531">
    <property type="term" value="F:ADP binding"/>
    <property type="evidence" value="ECO:0007669"/>
    <property type="project" value="TreeGrafter"/>
</dbReference>
<dbReference type="GO" id="GO:0005524">
    <property type="term" value="F:ATP binding"/>
    <property type="evidence" value="ECO:0007669"/>
    <property type="project" value="UniProtKB-KW"/>
</dbReference>
<dbReference type="GO" id="GO:0004618">
    <property type="term" value="F:phosphoglycerate kinase activity"/>
    <property type="evidence" value="ECO:0007669"/>
    <property type="project" value="UniProtKB-UniRule"/>
</dbReference>
<dbReference type="GO" id="GO:0006094">
    <property type="term" value="P:gluconeogenesis"/>
    <property type="evidence" value="ECO:0007669"/>
    <property type="project" value="TreeGrafter"/>
</dbReference>
<dbReference type="GO" id="GO:0006096">
    <property type="term" value="P:glycolytic process"/>
    <property type="evidence" value="ECO:0007669"/>
    <property type="project" value="UniProtKB-UniRule"/>
</dbReference>
<dbReference type="CDD" id="cd00318">
    <property type="entry name" value="Phosphoglycerate_kinase"/>
    <property type="match status" value="1"/>
</dbReference>
<dbReference type="FunFam" id="3.40.50.1260:FF:000002">
    <property type="entry name" value="Phosphoglycerate kinase"/>
    <property type="match status" value="1"/>
</dbReference>
<dbReference type="FunFam" id="3.40.50.1260:FF:000007">
    <property type="entry name" value="Phosphoglycerate kinase"/>
    <property type="match status" value="1"/>
</dbReference>
<dbReference type="Gene3D" id="3.40.50.1260">
    <property type="entry name" value="Phosphoglycerate kinase, N-terminal domain"/>
    <property type="match status" value="2"/>
</dbReference>
<dbReference type="HAMAP" id="MF_00145">
    <property type="entry name" value="Phosphoglyc_kinase"/>
    <property type="match status" value="1"/>
</dbReference>
<dbReference type="InterPro" id="IPR001576">
    <property type="entry name" value="Phosphoglycerate_kinase"/>
</dbReference>
<dbReference type="InterPro" id="IPR015911">
    <property type="entry name" value="Phosphoglycerate_kinase_CS"/>
</dbReference>
<dbReference type="InterPro" id="IPR015824">
    <property type="entry name" value="Phosphoglycerate_kinase_N"/>
</dbReference>
<dbReference type="InterPro" id="IPR036043">
    <property type="entry name" value="Phosphoglycerate_kinase_sf"/>
</dbReference>
<dbReference type="PANTHER" id="PTHR11406">
    <property type="entry name" value="PHOSPHOGLYCERATE KINASE"/>
    <property type="match status" value="1"/>
</dbReference>
<dbReference type="PANTHER" id="PTHR11406:SF23">
    <property type="entry name" value="PHOSPHOGLYCERATE KINASE 1, CHLOROPLASTIC-RELATED"/>
    <property type="match status" value="1"/>
</dbReference>
<dbReference type="Pfam" id="PF00162">
    <property type="entry name" value="PGK"/>
    <property type="match status" value="1"/>
</dbReference>
<dbReference type="PIRSF" id="PIRSF000724">
    <property type="entry name" value="Pgk"/>
    <property type="match status" value="1"/>
</dbReference>
<dbReference type="PRINTS" id="PR00477">
    <property type="entry name" value="PHGLYCKINASE"/>
</dbReference>
<dbReference type="SUPFAM" id="SSF53748">
    <property type="entry name" value="Phosphoglycerate kinase"/>
    <property type="match status" value="1"/>
</dbReference>
<dbReference type="PROSITE" id="PS00111">
    <property type="entry name" value="PGLYCERATE_KINASE"/>
    <property type="match status" value="1"/>
</dbReference>
<evidence type="ECO:0000255" key="1">
    <source>
        <dbReference type="HAMAP-Rule" id="MF_00145"/>
    </source>
</evidence>
<comment type="catalytic activity">
    <reaction evidence="1">
        <text>(2R)-3-phosphoglycerate + ATP = (2R)-3-phospho-glyceroyl phosphate + ADP</text>
        <dbReference type="Rhea" id="RHEA:14801"/>
        <dbReference type="ChEBI" id="CHEBI:30616"/>
        <dbReference type="ChEBI" id="CHEBI:57604"/>
        <dbReference type="ChEBI" id="CHEBI:58272"/>
        <dbReference type="ChEBI" id="CHEBI:456216"/>
        <dbReference type="EC" id="2.7.2.3"/>
    </reaction>
</comment>
<comment type="pathway">
    <text evidence="1">Carbohydrate degradation; glycolysis; pyruvate from D-glyceraldehyde 3-phosphate: step 2/5.</text>
</comment>
<comment type="subunit">
    <text evidence="1">Monomer.</text>
</comment>
<comment type="subcellular location">
    <subcellularLocation>
        <location evidence="1">Cytoplasm</location>
    </subcellularLocation>
</comment>
<comment type="similarity">
    <text evidence="1">Belongs to the phosphoglycerate kinase family.</text>
</comment>
<name>PGK_SHOC1</name>
<sequence length="394" mass="42140">MNKKTLYDYDFAGKTVFCRVDFNVPMKDGKITDETRIQAALPTIKYLSEQGARVLLASHLGRPKGEVVESLRLAPVATRLSELLGKEVQAVQEAHGPVAKQAVEGLEDGGVLLLENVRFYPGEEKNDPELAKAFASLADIFVNDAFGAAHRAHASTEGIAHYLPSAAGFLMEKELDVLGKALSNPERPFTAVIGGAKVKDKIGVIDNLLDKVDNLIIGGGLAYTFVKAQGYEVGKSLLEEDKLDLAKQFMEKAEQKGVKFYMPEDVIVADDFSDDANKKEVAISGIPADWEALDIGPKTRKTYEAVLKASKLVIWNGPMGVFELESFAGGTKAVANALAEASDTYSVIGGGDSAAAVEQFGLADKMSHISTGGGASLEFMEGKELPGVVALSEK</sequence>
<keyword id="KW-0067">ATP-binding</keyword>
<keyword id="KW-0963">Cytoplasm</keyword>
<keyword id="KW-0324">Glycolysis</keyword>
<keyword id="KW-0418">Kinase</keyword>
<keyword id="KW-0547">Nucleotide-binding</keyword>
<keyword id="KW-0597">Phosphoprotein</keyword>
<keyword id="KW-1185">Reference proteome</keyword>
<keyword id="KW-0808">Transferase</keyword>
<accession>Q5WDK6</accession>
<organism>
    <name type="scientific">Shouchella clausii (strain KSM-K16)</name>
    <name type="common">Alkalihalobacillus clausii</name>
    <dbReference type="NCBI Taxonomy" id="66692"/>
    <lineage>
        <taxon>Bacteria</taxon>
        <taxon>Bacillati</taxon>
        <taxon>Bacillota</taxon>
        <taxon>Bacilli</taxon>
        <taxon>Bacillales</taxon>
        <taxon>Bacillaceae</taxon>
        <taxon>Shouchella</taxon>
    </lineage>
</organism>